<accession>A3KMT2</accession>
<name>DAL1L_XENLA</name>
<keyword id="KW-1185">Reference proteome</keyword>
<keyword id="KW-0810">Translation regulation</keyword>
<feature type="chain" id="PRO_0000316837" description="Death-associated protein-like 1.L">
    <location>
        <begin position="1"/>
        <end position="113"/>
    </location>
</feature>
<feature type="region of interest" description="Disordered" evidence="1">
    <location>
        <begin position="1"/>
        <end position="57"/>
    </location>
</feature>
<proteinExistence type="evidence at protein level"/>
<sequence length="113" mass="12527">MAKEQKMQSSPQALKAGHLPAVKAGGMRVSKKQGNEENSAPEKNAKKTLQEKPSSVLNMTKMQAMNILAGELEKLSHDFPGEAAQIAHQKPRPTVEKTILPKRLYIIQQPRRC</sequence>
<comment type="function">
    <text evidence="2">Ribosome-binding protein that promotes ribosome hibernation, a process during which ribosomes are stabilized in an inactive state and preserved from proteasomal degradation (PubMed:36653451). Acts via its association with eiF5a (eif5a and eif5a2) at the polypeptide exit tunnel of the ribosome, preventing mRNA translation (PubMed:36653451). Plays a key role in ribosome hibernation in the mature egg by preventing mRNA translation, leading to ribosome inactivation (PubMed:36653451). Ribosomes, which are produced in large quantities during oogenesis, are stored and translationally repressed in the egg and early embryo (PubMed:36653451).</text>
</comment>
<comment type="subunit">
    <text evidence="2">Associates with ribosomes; preventing translation (PubMed:36653451). Interacts with eiF5a (eif5a and eif5a2); preventing translation (PubMed:36653451).</text>
</comment>
<comment type="similarity">
    <text evidence="3">Belongs to the DAP-DAPL1 family.</text>
</comment>
<organism>
    <name type="scientific">Xenopus laevis</name>
    <name type="common">African clawed frog</name>
    <dbReference type="NCBI Taxonomy" id="8355"/>
    <lineage>
        <taxon>Eukaryota</taxon>
        <taxon>Metazoa</taxon>
        <taxon>Chordata</taxon>
        <taxon>Craniata</taxon>
        <taxon>Vertebrata</taxon>
        <taxon>Euteleostomi</taxon>
        <taxon>Amphibia</taxon>
        <taxon>Batrachia</taxon>
        <taxon>Anura</taxon>
        <taxon>Pipoidea</taxon>
        <taxon>Pipidae</taxon>
        <taxon>Xenopodinae</taxon>
        <taxon>Xenopus</taxon>
        <taxon>Xenopus</taxon>
    </lineage>
</organism>
<dbReference type="EMBL" id="CM004482">
    <property type="status" value="NOT_ANNOTATED_CDS"/>
    <property type="molecule type" value="Genomic_DNA"/>
</dbReference>
<dbReference type="EMBL" id="BC133188">
    <property type="protein sequence ID" value="AAI33189.1"/>
    <property type="molecule type" value="mRNA"/>
</dbReference>
<dbReference type="RefSeq" id="NP_001091403.1">
    <property type="nucleotide sequence ID" value="NM_001097934.1"/>
</dbReference>
<dbReference type="SMR" id="A3KMT2"/>
<dbReference type="BioGRID" id="674541">
    <property type="interactions" value="1"/>
</dbReference>
<dbReference type="DNASU" id="100049092"/>
<dbReference type="GeneID" id="100049092"/>
<dbReference type="KEGG" id="xla:100049092"/>
<dbReference type="AGR" id="Xenbase:XB-GENE-1014852"/>
<dbReference type="CTD" id="100049092"/>
<dbReference type="Xenbase" id="XB-GENE-1014852">
    <property type="gene designation" value="dapl1.L"/>
</dbReference>
<dbReference type="OMA" id="PNRMQQV"/>
<dbReference type="OrthoDB" id="9934354at2759"/>
<dbReference type="Proteomes" id="UP000186698">
    <property type="component" value="Chromosome 9_10L"/>
</dbReference>
<dbReference type="Proteomes" id="UP000694892">
    <property type="component" value="Chromosome 9_10L"/>
</dbReference>
<dbReference type="Bgee" id="100049092">
    <property type="expression patterns" value="Expressed in pancreas and 19 other cell types or tissues"/>
</dbReference>
<dbReference type="GO" id="GO:0070513">
    <property type="term" value="F:death domain binding"/>
    <property type="evidence" value="ECO:0007669"/>
    <property type="project" value="TreeGrafter"/>
</dbReference>
<dbReference type="GO" id="GO:0043022">
    <property type="term" value="F:ribosome binding"/>
    <property type="evidence" value="ECO:0000314"/>
    <property type="project" value="UniProtKB"/>
</dbReference>
<dbReference type="GO" id="GO:0031369">
    <property type="term" value="F:translation initiation factor binding"/>
    <property type="evidence" value="ECO:0000314"/>
    <property type="project" value="UniProtKB"/>
</dbReference>
<dbReference type="GO" id="GO:0030371">
    <property type="term" value="F:translation repressor activity"/>
    <property type="evidence" value="ECO:0000314"/>
    <property type="project" value="UniProtKB"/>
</dbReference>
<dbReference type="GO" id="GO:0097190">
    <property type="term" value="P:apoptotic signaling pathway"/>
    <property type="evidence" value="ECO:0000318"/>
    <property type="project" value="GO_Central"/>
</dbReference>
<dbReference type="GO" id="GO:0034198">
    <property type="term" value="P:cellular response to amino acid starvation"/>
    <property type="evidence" value="ECO:0007669"/>
    <property type="project" value="TreeGrafter"/>
</dbReference>
<dbReference type="GO" id="GO:0010507">
    <property type="term" value="P:negative regulation of autophagy"/>
    <property type="evidence" value="ECO:0000318"/>
    <property type="project" value="GO_Central"/>
</dbReference>
<dbReference type="GO" id="GO:0141014">
    <property type="term" value="P:ribosome hibernation"/>
    <property type="evidence" value="ECO:0000314"/>
    <property type="project" value="UniProtKB"/>
</dbReference>
<dbReference type="InterPro" id="IPR024130">
    <property type="entry name" value="DAP1/DAPL1"/>
</dbReference>
<dbReference type="PANTHER" id="PTHR13177">
    <property type="entry name" value="DEATH-ASSOCIATED PROTEIN 1"/>
    <property type="match status" value="1"/>
</dbReference>
<dbReference type="PANTHER" id="PTHR13177:SF2">
    <property type="entry name" value="DEATH-ASSOCIATED PROTEIN-LIKE 1"/>
    <property type="match status" value="1"/>
</dbReference>
<dbReference type="Pfam" id="PF15228">
    <property type="entry name" value="DAP"/>
    <property type="match status" value="1"/>
</dbReference>
<evidence type="ECO:0000256" key="1">
    <source>
        <dbReference type="SAM" id="MobiDB-lite"/>
    </source>
</evidence>
<evidence type="ECO:0000269" key="2">
    <source>
    </source>
</evidence>
<evidence type="ECO:0000305" key="3"/>
<protein>
    <recommendedName>
        <fullName>Death-associated protein-like 1.L</fullName>
    </recommendedName>
</protein>
<reference key="1">
    <citation type="journal article" date="2013" name="Nature">
        <title>The zebrafish reference genome sequence and its relationship to the human genome.</title>
        <authorList>
            <person name="Howe K."/>
            <person name="Clark M.D."/>
            <person name="Torroja C.F."/>
            <person name="Torrance J."/>
            <person name="Berthelot C."/>
            <person name="Muffato M."/>
            <person name="Collins J.E."/>
            <person name="Humphray S."/>
            <person name="McLaren K."/>
            <person name="Matthews L."/>
            <person name="McLaren S."/>
            <person name="Sealy I."/>
            <person name="Caccamo M."/>
            <person name="Churcher C."/>
            <person name="Scott C."/>
            <person name="Barrett J.C."/>
            <person name="Koch R."/>
            <person name="Rauch G.J."/>
            <person name="White S."/>
            <person name="Chow W."/>
            <person name="Kilian B."/>
            <person name="Quintais L.T."/>
            <person name="Guerra-Assuncao J.A."/>
            <person name="Zhou Y."/>
            <person name="Gu Y."/>
            <person name="Yen J."/>
            <person name="Vogel J.H."/>
            <person name="Eyre T."/>
            <person name="Redmond S."/>
            <person name="Banerjee R."/>
            <person name="Chi J."/>
            <person name="Fu B."/>
            <person name="Langley E."/>
            <person name="Maguire S.F."/>
            <person name="Laird G.K."/>
            <person name="Lloyd D."/>
            <person name="Kenyon E."/>
            <person name="Donaldson S."/>
            <person name="Sehra H."/>
            <person name="Almeida-King J."/>
            <person name="Loveland J."/>
            <person name="Trevanion S."/>
            <person name="Jones M."/>
            <person name="Quail M."/>
            <person name="Willey D."/>
            <person name="Hunt A."/>
            <person name="Burton J."/>
            <person name="Sims S."/>
            <person name="McLay K."/>
            <person name="Plumb B."/>
            <person name="Davis J."/>
            <person name="Clee C."/>
            <person name="Oliver K."/>
            <person name="Clark R."/>
            <person name="Riddle C."/>
            <person name="Elliot D."/>
            <person name="Threadgold G."/>
            <person name="Harden G."/>
            <person name="Ware D."/>
            <person name="Begum S."/>
            <person name="Mortimore B."/>
            <person name="Kerry G."/>
            <person name="Heath P."/>
            <person name="Phillimore B."/>
            <person name="Tracey A."/>
            <person name="Corby N."/>
            <person name="Dunn M."/>
            <person name="Johnson C."/>
            <person name="Wood J."/>
            <person name="Clark S."/>
            <person name="Pelan S."/>
            <person name="Griffiths G."/>
            <person name="Smith M."/>
            <person name="Glithero R."/>
            <person name="Howden P."/>
            <person name="Barker N."/>
            <person name="Lloyd C."/>
            <person name="Stevens C."/>
            <person name="Harley J."/>
            <person name="Holt K."/>
            <person name="Panagiotidis G."/>
            <person name="Lovell J."/>
            <person name="Beasley H."/>
            <person name="Henderson C."/>
            <person name="Gordon D."/>
            <person name="Auger K."/>
            <person name="Wright D."/>
            <person name="Collins J."/>
            <person name="Raisen C."/>
            <person name="Dyer L."/>
            <person name="Leung K."/>
            <person name="Robertson L."/>
            <person name="Ambridge K."/>
            <person name="Leongamornlert D."/>
            <person name="McGuire S."/>
            <person name="Gilderthorp R."/>
            <person name="Griffiths C."/>
            <person name="Manthravadi D."/>
            <person name="Nichol S."/>
            <person name="Barker G."/>
            <person name="Whitehead S."/>
            <person name="Kay M."/>
            <person name="Brown J."/>
            <person name="Murnane C."/>
            <person name="Gray E."/>
            <person name="Humphries M."/>
            <person name="Sycamore N."/>
            <person name="Barker D."/>
            <person name="Saunders D."/>
            <person name="Wallis J."/>
            <person name="Babbage A."/>
            <person name="Hammond S."/>
            <person name="Mashreghi-Mohammadi M."/>
            <person name="Barr L."/>
            <person name="Martin S."/>
            <person name="Wray P."/>
            <person name="Ellington A."/>
            <person name="Matthews N."/>
            <person name="Ellwood M."/>
            <person name="Woodmansey R."/>
            <person name="Clark G."/>
            <person name="Cooper J."/>
            <person name="Tromans A."/>
            <person name="Grafham D."/>
            <person name="Skuce C."/>
            <person name="Pandian R."/>
            <person name="Andrews R."/>
            <person name="Harrison E."/>
            <person name="Kimberley A."/>
            <person name="Garnett J."/>
            <person name="Fosker N."/>
            <person name="Hall R."/>
            <person name="Garner P."/>
            <person name="Kelly D."/>
            <person name="Bird C."/>
            <person name="Palmer S."/>
            <person name="Gehring I."/>
            <person name="Berger A."/>
            <person name="Dooley C.M."/>
            <person name="Ersan-Urun Z."/>
            <person name="Eser C."/>
            <person name="Geiger H."/>
            <person name="Geisler M."/>
            <person name="Karotki L."/>
            <person name="Kirn A."/>
            <person name="Konantz J."/>
            <person name="Konantz M."/>
            <person name="Oberlander M."/>
            <person name="Rudolph-Geiger S."/>
            <person name="Teucke M."/>
            <person name="Lanz C."/>
            <person name="Raddatz G."/>
            <person name="Osoegawa K."/>
            <person name="Zhu B."/>
            <person name="Rapp A."/>
            <person name="Widaa S."/>
            <person name="Langford C."/>
            <person name="Yang F."/>
            <person name="Schuster S.C."/>
            <person name="Carter N.P."/>
            <person name="Harrow J."/>
            <person name="Ning Z."/>
            <person name="Herrero J."/>
            <person name="Searle S.M."/>
            <person name="Enright A."/>
            <person name="Geisler R."/>
            <person name="Plasterk R.H."/>
            <person name="Lee C."/>
            <person name="Westerfield M."/>
            <person name="de Jong P.J."/>
            <person name="Zon L.I."/>
            <person name="Postlethwait J.H."/>
            <person name="Nusslein-Volhard C."/>
            <person name="Hubbard T.J."/>
            <person name="Roest Crollius H."/>
            <person name="Rogers J."/>
            <person name="Stemple D.L."/>
        </authorList>
    </citation>
    <scope>NUCLEOTIDE SEQUENCE [LARGE SCALE GENOMIC DNA]</scope>
    <source>
        <strain>Tuebingen</strain>
    </source>
</reference>
<reference key="2">
    <citation type="submission" date="2007-02" db="EMBL/GenBank/DDBJ databases">
        <authorList>
            <consortium name="NIH - Xenopus Gene Collection (XGC) project"/>
        </authorList>
    </citation>
    <scope>NUCLEOTIDE SEQUENCE [LARGE SCALE MRNA]</scope>
    <source>
        <tissue>Kidney</tissue>
    </source>
</reference>
<reference key="3">
    <citation type="journal article" date="2023" name="Nature">
        <title>A molecular network of conserved factors keeps ribosomes dormant in the egg.</title>
        <authorList>
            <person name="Leesch F."/>
            <person name="Lorenzo-Orts L."/>
            <person name="Pribitzer C."/>
            <person name="Grishkovskaya I."/>
            <person name="Roehsner J."/>
            <person name="Chugunova A."/>
            <person name="Matzinger M."/>
            <person name="Roitinger E."/>
            <person name="Belacic K."/>
            <person name="Kandolf S."/>
            <person name="Lin T.Y."/>
            <person name="Mechtler K."/>
            <person name="Meinhart A."/>
            <person name="Haselbach D."/>
            <person name="Pauli A."/>
        </authorList>
    </citation>
    <scope>FUNCTION</scope>
    <scope>INTERACTION WITH EIF5A</scope>
    <scope>RIBOSOME-BINDING</scope>
</reference>
<gene>
    <name type="primary">dapl1.L</name>
</gene>